<protein>
    <recommendedName>
        <fullName evidence="1">S-adenosylmethionine synthase</fullName>
        <shortName evidence="1">AdoMet synthase</shortName>
        <ecNumber evidence="1">2.5.1.6</ecNumber>
    </recommendedName>
    <alternativeName>
        <fullName evidence="1">MAT</fullName>
    </alternativeName>
    <alternativeName>
        <fullName evidence="1">Methionine adenosyltransferase</fullName>
    </alternativeName>
</protein>
<organism>
    <name type="scientific">Paraburkholderia phymatum (strain DSM 17167 / CIP 108236 / LMG 21445 / STM815)</name>
    <name type="common">Burkholderia phymatum</name>
    <dbReference type="NCBI Taxonomy" id="391038"/>
    <lineage>
        <taxon>Bacteria</taxon>
        <taxon>Pseudomonadati</taxon>
        <taxon>Pseudomonadota</taxon>
        <taxon>Betaproteobacteria</taxon>
        <taxon>Burkholderiales</taxon>
        <taxon>Burkholderiaceae</taxon>
        <taxon>Paraburkholderia</taxon>
    </lineage>
</organism>
<proteinExistence type="inferred from homology"/>
<evidence type="ECO:0000255" key="1">
    <source>
        <dbReference type="HAMAP-Rule" id="MF_00086"/>
    </source>
</evidence>
<keyword id="KW-0067">ATP-binding</keyword>
<keyword id="KW-0963">Cytoplasm</keyword>
<keyword id="KW-0460">Magnesium</keyword>
<keyword id="KW-0479">Metal-binding</keyword>
<keyword id="KW-0547">Nucleotide-binding</keyword>
<keyword id="KW-0554">One-carbon metabolism</keyword>
<keyword id="KW-0630">Potassium</keyword>
<keyword id="KW-1185">Reference proteome</keyword>
<keyword id="KW-0808">Transferase</keyword>
<feature type="chain" id="PRO_1000093031" description="S-adenosylmethionine synthase">
    <location>
        <begin position="1"/>
        <end position="395"/>
    </location>
</feature>
<feature type="region of interest" description="Flexible loop" evidence="1">
    <location>
        <begin position="100"/>
        <end position="110"/>
    </location>
</feature>
<feature type="binding site" description="in other chain" evidence="1">
    <location>
        <position position="16"/>
    </location>
    <ligand>
        <name>ATP</name>
        <dbReference type="ChEBI" id="CHEBI:30616"/>
        <note>ligand shared between two neighboring subunits</note>
    </ligand>
</feature>
<feature type="binding site" evidence="1">
    <location>
        <position position="18"/>
    </location>
    <ligand>
        <name>Mg(2+)</name>
        <dbReference type="ChEBI" id="CHEBI:18420"/>
    </ligand>
</feature>
<feature type="binding site" evidence="1">
    <location>
        <position position="44"/>
    </location>
    <ligand>
        <name>K(+)</name>
        <dbReference type="ChEBI" id="CHEBI:29103"/>
    </ligand>
</feature>
<feature type="binding site" description="in other chain" evidence="1">
    <location>
        <position position="57"/>
    </location>
    <ligand>
        <name>L-methionine</name>
        <dbReference type="ChEBI" id="CHEBI:57844"/>
        <note>ligand shared between two neighboring subunits</note>
    </ligand>
</feature>
<feature type="binding site" description="in other chain" evidence="1">
    <location>
        <position position="100"/>
    </location>
    <ligand>
        <name>L-methionine</name>
        <dbReference type="ChEBI" id="CHEBI:57844"/>
        <note>ligand shared between two neighboring subunits</note>
    </ligand>
</feature>
<feature type="binding site" description="in other chain" evidence="1">
    <location>
        <begin position="167"/>
        <end position="169"/>
    </location>
    <ligand>
        <name>ATP</name>
        <dbReference type="ChEBI" id="CHEBI:30616"/>
        <note>ligand shared between two neighboring subunits</note>
    </ligand>
</feature>
<feature type="binding site" description="in other chain" evidence="1">
    <location>
        <begin position="233"/>
        <end position="234"/>
    </location>
    <ligand>
        <name>ATP</name>
        <dbReference type="ChEBI" id="CHEBI:30616"/>
        <note>ligand shared between two neighboring subunits</note>
    </ligand>
</feature>
<feature type="binding site" evidence="1">
    <location>
        <position position="242"/>
    </location>
    <ligand>
        <name>ATP</name>
        <dbReference type="ChEBI" id="CHEBI:30616"/>
        <note>ligand shared between two neighboring subunits</note>
    </ligand>
</feature>
<feature type="binding site" evidence="1">
    <location>
        <position position="242"/>
    </location>
    <ligand>
        <name>L-methionine</name>
        <dbReference type="ChEBI" id="CHEBI:57844"/>
        <note>ligand shared between two neighboring subunits</note>
    </ligand>
</feature>
<feature type="binding site" description="in other chain" evidence="1">
    <location>
        <begin position="248"/>
        <end position="249"/>
    </location>
    <ligand>
        <name>ATP</name>
        <dbReference type="ChEBI" id="CHEBI:30616"/>
        <note>ligand shared between two neighboring subunits</note>
    </ligand>
</feature>
<feature type="binding site" evidence="1">
    <location>
        <position position="265"/>
    </location>
    <ligand>
        <name>ATP</name>
        <dbReference type="ChEBI" id="CHEBI:30616"/>
        <note>ligand shared between two neighboring subunits</note>
    </ligand>
</feature>
<feature type="binding site" evidence="1">
    <location>
        <position position="269"/>
    </location>
    <ligand>
        <name>ATP</name>
        <dbReference type="ChEBI" id="CHEBI:30616"/>
        <note>ligand shared between two neighboring subunits</note>
    </ligand>
</feature>
<feature type="binding site" description="in other chain" evidence="1">
    <location>
        <position position="273"/>
    </location>
    <ligand>
        <name>L-methionine</name>
        <dbReference type="ChEBI" id="CHEBI:57844"/>
        <note>ligand shared between two neighboring subunits</note>
    </ligand>
</feature>
<accession>B2JJY6</accession>
<comment type="function">
    <text evidence="1">Catalyzes the formation of S-adenosylmethionine (AdoMet) from methionine and ATP. The overall synthetic reaction is composed of two sequential steps, AdoMet formation and the subsequent tripolyphosphate hydrolysis which occurs prior to release of AdoMet from the enzyme.</text>
</comment>
<comment type="catalytic activity">
    <reaction evidence="1">
        <text>L-methionine + ATP + H2O = S-adenosyl-L-methionine + phosphate + diphosphate</text>
        <dbReference type="Rhea" id="RHEA:21080"/>
        <dbReference type="ChEBI" id="CHEBI:15377"/>
        <dbReference type="ChEBI" id="CHEBI:30616"/>
        <dbReference type="ChEBI" id="CHEBI:33019"/>
        <dbReference type="ChEBI" id="CHEBI:43474"/>
        <dbReference type="ChEBI" id="CHEBI:57844"/>
        <dbReference type="ChEBI" id="CHEBI:59789"/>
        <dbReference type="EC" id="2.5.1.6"/>
    </reaction>
</comment>
<comment type="cofactor">
    <cofactor evidence="1">
        <name>Mg(2+)</name>
        <dbReference type="ChEBI" id="CHEBI:18420"/>
    </cofactor>
    <text evidence="1">Binds 2 divalent ions per subunit.</text>
</comment>
<comment type="cofactor">
    <cofactor evidence="1">
        <name>K(+)</name>
        <dbReference type="ChEBI" id="CHEBI:29103"/>
    </cofactor>
    <text evidence="1">Binds 1 potassium ion per subunit.</text>
</comment>
<comment type="pathway">
    <text evidence="1">Amino-acid biosynthesis; S-adenosyl-L-methionine biosynthesis; S-adenosyl-L-methionine from L-methionine: step 1/1.</text>
</comment>
<comment type="subunit">
    <text evidence="1">Homotetramer; dimer of dimers.</text>
</comment>
<comment type="subcellular location">
    <subcellularLocation>
        <location evidence="1">Cytoplasm</location>
    </subcellularLocation>
</comment>
<comment type="similarity">
    <text evidence="1">Belongs to the AdoMet synthase family.</text>
</comment>
<dbReference type="EC" id="2.5.1.6" evidence="1"/>
<dbReference type="EMBL" id="CP001043">
    <property type="protein sequence ID" value="ACC69273.1"/>
    <property type="molecule type" value="Genomic_DNA"/>
</dbReference>
<dbReference type="RefSeq" id="WP_012399503.1">
    <property type="nucleotide sequence ID" value="NC_010622.1"/>
</dbReference>
<dbReference type="SMR" id="B2JJY6"/>
<dbReference type="STRING" id="391038.Bphy_0078"/>
<dbReference type="KEGG" id="bph:Bphy_0078"/>
<dbReference type="eggNOG" id="COG0192">
    <property type="taxonomic scope" value="Bacteria"/>
</dbReference>
<dbReference type="HOGENOM" id="CLU_041802_1_1_4"/>
<dbReference type="OrthoDB" id="9801686at2"/>
<dbReference type="UniPathway" id="UPA00315">
    <property type="reaction ID" value="UER00080"/>
</dbReference>
<dbReference type="Proteomes" id="UP000001192">
    <property type="component" value="Chromosome 1"/>
</dbReference>
<dbReference type="GO" id="GO:0005737">
    <property type="term" value="C:cytoplasm"/>
    <property type="evidence" value="ECO:0007669"/>
    <property type="project" value="UniProtKB-SubCell"/>
</dbReference>
<dbReference type="GO" id="GO:0005524">
    <property type="term" value="F:ATP binding"/>
    <property type="evidence" value="ECO:0007669"/>
    <property type="project" value="UniProtKB-UniRule"/>
</dbReference>
<dbReference type="GO" id="GO:0000287">
    <property type="term" value="F:magnesium ion binding"/>
    <property type="evidence" value="ECO:0007669"/>
    <property type="project" value="UniProtKB-UniRule"/>
</dbReference>
<dbReference type="GO" id="GO:0004478">
    <property type="term" value="F:methionine adenosyltransferase activity"/>
    <property type="evidence" value="ECO:0007669"/>
    <property type="project" value="UniProtKB-UniRule"/>
</dbReference>
<dbReference type="GO" id="GO:0006730">
    <property type="term" value="P:one-carbon metabolic process"/>
    <property type="evidence" value="ECO:0007669"/>
    <property type="project" value="UniProtKB-KW"/>
</dbReference>
<dbReference type="GO" id="GO:0006556">
    <property type="term" value="P:S-adenosylmethionine biosynthetic process"/>
    <property type="evidence" value="ECO:0007669"/>
    <property type="project" value="UniProtKB-UniRule"/>
</dbReference>
<dbReference type="CDD" id="cd18079">
    <property type="entry name" value="S-AdoMet_synt"/>
    <property type="match status" value="1"/>
</dbReference>
<dbReference type="FunFam" id="3.30.300.10:FF:000003">
    <property type="entry name" value="S-adenosylmethionine synthase"/>
    <property type="match status" value="1"/>
</dbReference>
<dbReference type="FunFam" id="3.30.300.10:FF:000004">
    <property type="entry name" value="S-adenosylmethionine synthase"/>
    <property type="match status" value="1"/>
</dbReference>
<dbReference type="Gene3D" id="3.30.300.10">
    <property type="match status" value="3"/>
</dbReference>
<dbReference type="HAMAP" id="MF_00086">
    <property type="entry name" value="S_AdoMet_synth1"/>
    <property type="match status" value="1"/>
</dbReference>
<dbReference type="InterPro" id="IPR022631">
    <property type="entry name" value="ADOMET_SYNTHASE_CS"/>
</dbReference>
<dbReference type="InterPro" id="IPR022630">
    <property type="entry name" value="S-AdoMet_synt_C"/>
</dbReference>
<dbReference type="InterPro" id="IPR022629">
    <property type="entry name" value="S-AdoMet_synt_central"/>
</dbReference>
<dbReference type="InterPro" id="IPR022628">
    <property type="entry name" value="S-AdoMet_synt_N"/>
</dbReference>
<dbReference type="InterPro" id="IPR002133">
    <property type="entry name" value="S-AdoMet_synthetase"/>
</dbReference>
<dbReference type="InterPro" id="IPR022636">
    <property type="entry name" value="S-AdoMet_synthetase_sfam"/>
</dbReference>
<dbReference type="NCBIfam" id="TIGR01034">
    <property type="entry name" value="metK"/>
    <property type="match status" value="1"/>
</dbReference>
<dbReference type="PANTHER" id="PTHR11964">
    <property type="entry name" value="S-ADENOSYLMETHIONINE SYNTHETASE"/>
    <property type="match status" value="1"/>
</dbReference>
<dbReference type="Pfam" id="PF02773">
    <property type="entry name" value="S-AdoMet_synt_C"/>
    <property type="match status" value="1"/>
</dbReference>
<dbReference type="Pfam" id="PF02772">
    <property type="entry name" value="S-AdoMet_synt_M"/>
    <property type="match status" value="1"/>
</dbReference>
<dbReference type="Pfam" id="PF00438">
    <property type="entry name" value="S-AdoMet_synt_N"/>
    <property type="match status" value="1"/>
</dbReference>
<dbReference type="PIRSF" id="PIRSF000497">
    <property type="entry name" value="MAT"/>
    <property type="match status" value="1"/>
</dbReference>
<dbReference type="SUPFAM" id="SSF55973">
    <property type="entry name" value="S-adenosylmethionine synthetase"/>
    <property type="match status" value="3"/>
</dbReference>
<dbReference type="PROSITE" id="PS00376">
    <property type="entry name" value="ADOMET_SYNTHASE_1"/>
    <property type="match status" value="1"/>
</dbReference>
<dbReference type="PROSITE" id="PS00377">
    <property type="entry name" value="ADOMET_SYNTHASE_2"/>
    <property type="match status" value="1"/>
</dbReference>
<name>METK_PARP8</name>
<sequence length="395" mass="42604">MANDYLFTSESVSEGHPDKVADQISDAILDAILAQDKYSRVAAETLCNTGLVVLAGEITTTANVDYIQVARETIKRIGYDNTDYGIDYRGCAVLVAYDKQSPDIAQGVDRAHDNNLDQGAGDQGLMFGYACDETPELMPLPIHLSHRLVERQANLRRDGRLPWLRPDAKSQVTIRYVDGKPHSIDTVVLSTQHSPDIDLGQLREAVIEEIIKPTLPAELIKGDIKFLVNPTGRFVIGGPQGDCGLTGRKIIVDTYGGAAPHGGGAFSGKDPSKVDRSAAYAGRYVAKNIVAAGLASRALIQVSYAIGVAQPTSVMVNTFGTGRVSDATITRLVQEHFDLRPKGIIQMLDLLRPVYEKTAAYGHFGREEPEFSWEATDKALALAEAAGTEPVAALA</sequence>
<gene>
    <name evidence="1" type="primary">metK</name>
    <name type="ordered locus">Bphy_0078</name>
</gene>
<reference key="1">
    <citation type="journal article" date="2014" name="Stand. Genomic Sci.">
        <title>Complete genome sequence of Burkholderia phymatum STM815(T), a broad host range and efficient nitrogen-fixing symbiont of Mimosa species.</title>
        <authorList>
            <person name="Moulin L."/>
            <person name="Klonowska A."/>
            <person name="Caroline B."/>
            <person name="Booth K."/>
            <person name="Vriezen J.A."/>
            <person name="Melkonian R."/>
            <person name="James E.K."/>
            <person name="Young J.P."/>
            <person name="Bena G."/>
            <person name="Hauser L."/>
            <person name="Land M."/>
            <person name="Kyrpides N."/>
            <person name="Bruce D."/>
            <person name="Chain P."/>
            <person name="Copeland A."/>
            <person name="Pitluck S."/>
            <person name="Woyke T."/>
            <person name="Lizotte-Waniewski M."/>
            <person name="Bristow J."/>
            <person name="Riley M."/>
        </authorList>
    </citation>
    <scope>NUCLEOTIDE SEQUENCE [LARGE SCALE GENOMIC DNA]</scope>
    <source>
        <strain>DSM 17167 / CIP 108236 / LMG 21445 / STM815</strain>
    </source>
</reference>